<comment type="function">
    <text evidence="1">Necessary for efficient RNA polymerase transcription elongation past template-encoded arresting sites. The arresting sites in DNA have the property of trapping a certain fraction of elongating RNA polymerases that pass through, resulting in locked ternary complexes. Cleavage of the nascent transcript by cleavage factors such as GreA or GreB allows the resumption of elongation from the new 3'terminus. GreA releases sequences of 2 to 3 nucleotides.</text>
</comment>
<comment type="similarity">
    <text evidence="1">Belongs to the GreA/GreB family.</text>
</comment>
<organism>
    <name type="scientific">Psychromonas ingrahamii (strain DSM 17664 / CCUG 51855 / 37)</name>
    <dbReference type="NCBI Taxonomy" id="357804"/>
    <lineage>
        <taxon>Bacteria</taxon>
        <taxon>Pseudomonadati</taxon>
        <taxon>Pseudomonadota</taxon>
        <taxon>Gammaproteobacteria</taxon>
        <taxon>Alteromonadales</taxon>
        <taxon>Psychromonadaceae</taxon>
        <taxon>Psychromonas</taxon>
    </lineage>
</organism>
<sequence length="159" mass="17370">MVQYPMTANGAAKLRSELKQLKTVTRPRIVKAIAEAREHGDLKENAEYHAAREQQGFCEGRIQDIEAKLSNARIIDITNITNNGKVIFGATVTIVNVETDAEVTYKIVGDDEANIKINLISVSSPLARGLIGKTLDDEISIVTPGGTIDYEIISVQYIA</sequence>
<feature type="chain" id="PRO_1000075884" description="Transcription elongation factor GreA">
    <location>
        <begin position="1"/>
        <end position="159"/>
    </location>
</feature>
<reference key="1">
    <citation type="journal article" date="2008" name="BMC Genomics">
        <title>Genomics of an extreme psychrophile, Psychromonas ingrahamii.</title>
        <authorList>
            <person name="Riley M."/>
            <person name="Staley J.T."/>
            <person name="Danchin A."/>
            <person name="Wang T.Z."/>
            <person name="Brettin T.S."/>
            <person name="Hauser L.J."/>
            <person name="Land M.L."/>
            <person name="Thompson L.S."/>
        </authorList>
    </citation>
    <scope>NUCLEOTIDE SEQUENCE [LARGE SCALE GENOMIC DNA]</scope>
    <source>
        <strain>DSM 17664 / CCUG 51855 / 37</strain>
    </source>
</reference>
<proteinExistence type="inferred from homology"/>
<name>GREA_PSYIN</name>
<gene>
    <name evidence="1" type="primary">greA</name>
    <name type="ordered locus">Ping_0808</name>
</gene>
<evidence type="ECO:0000255" key="1">
    <source>
        <dbReference type="HAMAP-Rule" id="MF_00105"/>
    </source>
</evidence>
<accession>A1ST36</accession>
<dbReference type="EMBL" id="CP000510">
    <property type="protein sequence ID" value="ABM02651.1"/>
    <property type="molecule type" value="Genomic_DNA"/>
</dbReference>
<dbReference type="RefSeq" id="WP_011769214.1">
    <property type="nucleotide sequence ID" value="NC_008709.1"/>
</dbReference>
<dbReference type="SMR" id="A1ST36"/>
<dbReference type="STRING" id="357804.Ping_0808"/>
<dbReference type="KEGG" id="pin:Ping_0808"/>
<dbReference type="eggNOG" id="COG0782">
    <property type="taxonomic scope" value="Bacteria"/>
</dbReference>
<dbReference type="HOGENOM" id="CLU_101379_2_0_6"/>
<dbReference type="OrthoDB" id="9808774at2"/>
<dbReference type="Proteomes" id="UP000000639">
    <property type="component" value="Chromosome"/>
</dbReference>
<dbReference type="GO" id="GO:0003677">
    <property type="term" value="F:DNA binding"/>
    <property type="evidence" value="ECO:0007669"/>
    <property type="project" value="UniProtKB-UniRule"/>
</dbReference>
<dbReference type="GO" id="GO:0070063">
    <property type="term" value="F:RNA polymerase binding"/>
    <property type="evidence" value="ECO:0007669"/>
    <property type="project" value="InterPro"/>
</dbReference>
<dbReference type="GO" id="GO:0006354">
    <property type="term" value="P:DNA-templated transcription elongation"/>
    <property type="evidence" value="ECO:0007669"/>
    <property type="project" value="TreeGrafter"/>
</dbReference>
<dbReference type="GO" id="GO:0032784">
    <property type="term" value="P:regulation of DNA-templated transcription elongation"/>
    <property type="evidence" value="ECO:0007669"/>
    <property type="project" value="UniProtKB-UniRule"/>
</dbReference>
<dbReference type="FunFam" id="1.10.287.180:FF:000001">
    <property type="entry name" value="Transcription elongation factor GreA"/>
    <property type="match status" value="1"/>
</dbReference>
<dbReference type="FunFam" id="3.10.50.30:FF:000001">
    <property type="entry name" value="Transcription elongation factor GreA"/>
    <property type="match status" value="1"/>
</dbReference>
<dbReference type="Gene3D" id="3.10.50.30">
    <property type="entry name" value="Transcription elongation factor, GreA/GreB, C-terminal domain"/>
    <property type="match status" value="1"/>
</dbReference>
<dbReference type="Gene3D" id="1.10.287.180">
    <property type="entry name" value="Transcription elongation factor, GreA/GreB, N-terminal domain"/>
    <property type="match status" value="1"/>
</dbReference>
<dbReference type="HAMAP" id="MF_00105">
    <property type="entry name" value="GreA_GreB"/>
    <property type="match status" value="1"/>
</dbReference>
<dbReference type="InterPro" id="IPR036953">
    <property type="entry name" value="GreA/GreB_C_sf"/>
</dbReference>
<dbReference type="InterPro" id="IPR018151">
    <property type="entry name" value="TF_GreA/GreB_CS"/>
</dbReference>
<dbReference type="InterPro" id="IPR006359">
    <property type="entry name" value="Tscrpt_elong_fac_GreA"/>
</dbReference>
<dbReference type="InterPro" id="IPR028624">
    <property type="entry name" value="Tscrpt_elong_fac_GreA/B"/>
</dbReference>
<dbReference type="InterPro" id="IPR001437">
    <property type="entry name" value="Tscrpt_elong_fac_GreA/B_C"/>
</dbReference>
<dbReference type="InterPro" id="IPR023459">
    <property type="entry name" value="Tscrpt_elong_fac_GreA/B_fam"/>
</dbReference>
<dbReference type="InterPro" id="IPR022691">
    <property type="entry name" value="Tscrpt_elong_fac_GreA/B_N"/>
</dbReference>
<dbReference type="InterPro" id="IPR036805">
    <property type="entry name" value="Tscrpt_elong_fac_GreA/B_N_sf"/>
</dbReference>
<dbReference type="NCBIfam" id="TIGR01462">
    <property type="entry name" value="greA"/>
    <property type="match status" value="1"/>
</dbReference>
<dbReference type="NCBIfam" id="NF001261">
    <property type="entry name" value="PRK00226.1-2"/>
    <property type="match status" value="1"/>
</dbReference>
<dbReference type="NCBIfam" id="NF001263">
    <property type="entry name" value="PRK00226.1-4"/>
    <property type="match status" value="1"/>
</dbReference>
<dbReference type="NCBIfam" id="NF001264">
    <property type="entry name" value="PRK00226.1-5"/>
    <property type="match status" value="1"/>
</dbReference>
<dbReference type="PANTHER" id="PTHR30437">
    <property type="entry name" value="TRANSCRIPTION ELONGATION FACTOR GREA"/>
    <property type="match status" value="1"/>
</dbReference>
<dbReference type="PANTHER" id="PTHR30437:SF4">
    <property type="entry name" value="TRANSCRIPTION ELONGATION FACTOR GREA"/>
    <property type="match status" value="1"/>
</dbReference>
<dbReference type="Pfam" id="PF01272">
    <property type="entry name" value="GreA_GreB"/>
    <property type="match status" value="1"/>
</dbReference>
<dbReference type="Pfam" id="PF03449">
    <property type="entry name" value="GreA_GreB_N"/>
    <property type="match status" value="1"/>
</dbReference>
<dbReference type="PIRSF" id="PIRSF006092">
    <property type="entry name" value="GreA_GreB"/>
    <property type="match status" value="1"/>
</dbReference>
<dbReference type="SUPFAM" id="SSF54534">
    <property type="entry name" value="FKBP-like"/>
    <property type="match status" value="1"/>
</dbReference>
<dbReference type="SUPFAM" id="SSF46557">
    <property type="entry name" value="GreA transcript cleavage protein, N-terminal domain"/>
    <property type="match status" value="1"/>
</dbReference>
<dbReference type="PROSITE" id="PS00829">
    <property type="entry name" value="GREAB_1"/>
    <property type="match status" value="1"/>
</dbReference>
<dbReference type="PROSITE" id="PS00830">
    <property type="entry name" value="GREAB_2"/>
    <property type="match status" value="1"/>
</dbReference>
<protein>
    <recommendedName>
        <fullName evidence="1">Transcription elongation factor GreA</fullName>
    </recommendedName>
    <alternativeName>
        <fullName evidence="1">Transcript cleavage factor GreA</fullName>
    </alternativeName>
</protein>
<keyword id="KW-0238">DNA-binding</keyword>
<keyword id="KW-1185">Reference proteome</keyword>
<keyword id="KW-0804">Transcription</keyword>
<keyword id="KW-0805">Transcription regulation</keyword>